<protein>
    <recommendedName>
        <fullName>U-box domain-containing protein 63</fullName>
        <ecNumber>2.3.2.27</ecNumber>
    </recommendedName>
    <alternativeName>
        <fullName>Plant U-box protein 63</fullName>
    </alternativeName>
    <alternativeName>
        <fullName evidence="5">RING-type E3 ubiquitin transferase PUB63</fullName>
    </alternativeName>
</protein>
<name>PUB63_ARATH</name>
<evidence type="ECO:0000250" key="1"/>
<evidence type="ECO:0000256" key="2">
    <source>
        <dbReference type="SAM" id="MobiDB-lite"/>
    </source>
</evidence>
<evidence type="ECO:0000303" key="3">
    <source>
    </source>
</evidence>
<evidence type="ECO:0000303" key="4">
    <source ref="6"/>
</evidence>
<evidence type="ECO:0000305" key="5"/>
<reference key="1">
    <citation type="journal article" date="1999" name="Nature">
        <title>Sequence and analysis of chromosome 2 of the plant Arabidopsis thaliana.</title>
        <authorList>
            <person name="Lin X."/>
            <person name="Kaul S."/>
            <person name="Rounsley S.D."/>
            <person name="Shea T.P."/>
            <person name="Benito M.-I."/>
            <person name="Town C.D."/>
            <person name="Fujii C.Y."/>
            <person name="Mason T.M."/>
            <person name="Bowman C.L."/>
            <person name="Barnstead M.E."/>
            <person name="Feldblyum T.V."/>
            <person name="Buell C.R."/>
            <person name="Ketchum K.A."/>
            <person name="Lee J.J."/>
            <person name="Ronning C.M."/>
            <person name="Koo H.L."/>
            <person name="Moffat K.S."/>
            <person name="Cronin L.A."/>
            <person name="Shen M."/>
            <person name="Pai G."/>
            <person name="Van Aken S."/>
            <person name="Umayam L."/>
            <person name="Tallon L.J."/>
            <person name="Gill J.E."/>
            <person name="Adams M.D."/>
            <person name="Carrera A.J."/>
            <person name="Creasy T.H."/>
            <person name="Goodman H.M."/>
            <person name="Somerville C.R."/>
            <person name="Copenhaver G.P."/>
            <person name="Preuss D."/>
            <person name="Nierman W.C."/>
            <person name="White O."/>
            <person name="Eisen J.A."/>
            <person name="Salzberg S.L."/>
            <person name="Fraser C.M."/>
            <person name="Venter J.C."/>
        </authorList>
    </citation>
    <scope>NUCLEOTIDE SEQUENCE [LARGE SCALE GENOMIC DNA]</scope>
    <source>
        <strain>cv. Columbia</strain>
    </source>
</reference>
<reference key="2">
    <citation type="journal article" date="2017" name="Plant J.">
        <title>Araport11: a complete reannotation of the Arabidopsis thaliana reference genome.</title>
        <authorList>
            <person name="Cheng C.Y."/>
            <person name="Krishnakumar V."/>
            <person name="Chan A.P."/>
            <person name="Thibaud-Nissen F."/>
            <person name="Schobel S."/>
            <person name="Town C.D."/>
        </authorList>
    </citation>
    <scope>GENOME REANNOTATION</scope>
    <source>
        <strain>cv. Columbia</strain>
    </source>
</reference>
<reference key="3">
    <citation type="journal article" date="2004" name="Genome Res.">
        <title>Whole genome sequence comparisons and 'full-length' cDNA sequences: a combined approach to evaluate and improve Arabidopsis genome annotation.</title>
        <authorList>
            <person name="Castelli V."/>
            <person name="Aury J.-M."/>
            <person name="Jaillon O."/>
            <person name="Wincker P."/>
            <person name="Clepet C."/>
            <person name="Menard M."/>
            <person name="Cruaud C."/>
            <person name="Quetier F."/>
            <person name="Scarpelli C."/>
            <person name="Schaechter V."/>
            <person name="Temple G."/>
            <person name="Caboche M."/>
            <person name="Weissenbach J."/>
            <person name="Salanoubat M."/>
        </authorList>
    </citation>
    <scope>NUCLEOTIDE SEQUENCE [LARGE SCALE MRNA] (ISOFORM 3)</scope>
    <source>
        <strain>cv. Columbia</strain>
    </source>
</reference>
<reference key="4">
    <citation type="journal article" date="2005" name="Plant Physiol.">
        <title>Analysis of the cDNAs of hypothetical genes on Arabidopsis chromosome 2 reveals numerous transcript variants.</title>
        <authorList>
            <person name="Xiao Y.-L."/>
            <person name="Smith S.R."/>
            <person name="Ishmael N."/>
            <person name="Redman J.C."/>
            <person name="Kumar N."/>
            <person name="Monaghan E.L."/>
            <person name="Ayele M."/>
            <person name="Haas B.J."/>
            <person name="Wu H.C."/>
            <person name="Town C.D."/>
        </authorList>
    </citation>
    <scope>NUCLEOTIDE SEQUENCE [LARGE SCALE MRNA] (ISOFORM 1)</scope>
    <source>
        <strain>cv. Columbia</strain>
    </source>
</reference>
<reference key="5">
    <citation type="submission" date="2005-03" db="EMBL/GenBank/DDBJ databases">
        <authorList>
            <person name="Underwood B.A."/>
            <person name="Xiao Y.-L."/>
            <person name="Moskal W.A. Jr."/>
            <person name="Monaghan E.L."/>
            <person name="Wang W."/>
            <person name="Redman J.C."/>
            <person name="Wu H.C."/>
            <person name="Utterback T."/>
            <person name="Town C.D."/>
        </authorList>
    </citation>
    <scope>NUCLEOTIDE SEQUENCE [LARGE SCALE MRNA] (ISOFORM 1)</scope>
    <source>
        <strain>cv. Columbia</strain>
    </source>
</reference>
<reference key="6">
    <citation type="submission" date="2006-07" db="EMBL/GenBank/DDBJ databases">
        <title>Large-scale analysis of RIKEN Arabidopsis full-length (RAFL) cDNAs.</title>
        <authorList>
            <person name="Totoki Y."/>
            <person name="Seki M."/>
            <person name="Ishida J."/>
            <person name="Nakajima M."/>
            <person name="Enju A."/>
            <person name="Kamiya A."/>
            <person name="Narusaka M."/>
            <person name="Shin-i T."/>
            <person name="Nakagawa M."/>
            <person name="Sakamoto N."/>
            <person name="Oishi K."/>
            <person name="Kohara Y."/>
            <person name="Kobayashi M."/>
            <person name="Toyoda A."/>
            <person name="Sakaki Y."/>
            <person name="Sakurai T."/>
            <person name="Iida K."/>
            <person name="Akiyama K."/>
            <person name="Satou M."/>
            <person name="Toyoda T."/>
            <person name="Konagaya A."/>
            <person name="Carninci P."/>
            <person name="Kawai J."/>
            <person name="Hayashizaki Y."/>
            <person name="Shinozaki K."/>
        </authorList>
    </citation>
    <scope>NUCLEOTIDE SEQUENCE [LARGE SCALE MRNA] OF 2-383 (ISOFORMS 1 AND 2)</scope>
    <source>
        <strain>cv. Columbia</strain>
    </source>
</reference>
<proteinExistence type="evidence at transcript level"/>
<accession>Q58FY4</accession>
<accession>O22871</accession>
<accession>Q0WUK1</accession>
<accession>Q67XS7</accession>
<accession>Q680U6</accession>
<accession>Q680Z3</accession>
<accession>Q8GUT1</accession>
<feature type="chain" id="PRO_0000322195" description="U-box domain-containing protein 63">
    <location>
        <begin position="1"/>
        <end position="383"/>
    </location>
</feature>
<feature type="domain" description="U-box">
    <location>
        <begin position="201"/>
        <end position="273"/>
    </location>
</feature>
<feature type="region of interest" description="Disordered" evidence="2">
    <location>
        <begin position="166"/>
        <end position="186"/>
    </location>
</feature>
<feature type="splice variant" id="VSP_031886" description="In isoform 2." evidence="4">
    <original>SDQKRSFCIPNITETPKSSRGIQFPFSIGDHIIIEGNKRTPPRFVGRIAVIMTQCLNGWYVVKTVDNSESIKLQHCSLAKISDNSSTKVTVAEMPPSWL</original>
    <variation>REVSVSQTSLKLLRVAEAYSFLSPLEIILS</variation>
    <location>
        <begin position="285"/>
        <end position="383"/>
    </location>
</feature>
<feature type="splice variant" id="VSP_038053" description="In isoform 3." evidence="3">
    <original>YVVKTVDNSESIKLQHCSLAKISDNSSTKVTVAEMPPSWL</original>
    <variation>LSLVASFHP</variation>
    <location>
        <begin position="344"/>
        <end position="383"/>
    </location>
</feature>
<sequence length="383" mass="43302">MSHLRRRRFKLSLCALPVSIDRLLNFPAEKQMSVNDSIDPRFVFHVEDESLRFRVGDSGTKIRELETVGDRHFRTQQGFCGNRIEKDETMYSDGDDEEYDVSIRRRTALIQPGIDSGNNYDSAAAEETNRESKNPVGWELVVREDGEGNSTIDRHEMEFKVRITKPDGNVSNSHRNTQQKRDFASVEKERVTTTSVSSWESLKAILSDPVTGALMNDATILPCGHSFGAGGLKEVKKMKACFTCSQPTLEGSEKPNLSLRIVVHAFRQEEDSDHIHTLKRRKERSDQKRSFCIPNITETPKSSRGIQFPFSIGDHIIIEGNKRTPPRFVGRIAVIMTQCLNGWYVVKTVDNSESIKLQHCSLAKISDNSSTKVTVAEMPPSWL</sequence>
<keyword id="KW-0025">Alternative splicing</keyword>
<keyword id="KW-1185">Reference proteome</keyword>
<keyword id="KW-0808">Transferase</keyword>
<keyword id="KW-0833">Ubl conjugation pathway</keyword>
<comment type="function">
    <text evidence="1">Functions as an E3 ubiquitin ligase.</text>
</comment>
<comment type="catalytic activity">
    <reaction>
        <text>S-ubiquitinyl-[E2 ubiquitin-conjugating enzyme]-L-cysteine + [acceptor protein]-L-lysine = [E2 ubiquitin-conjugating enzyme]-L-cysteine + N(6)-ubiquitinyl-[acceptor protein]-L-lysine.</text>
        <dbReference type="EC" id="2.3.2.27"/>
    </reaction>
</comment>
<comment type="pathway">
    <text>Protein modification; protein ubiquitination.</text>
</comment>
<comment type="alternative products">
    <event type="alternative splicing"/>
    <isoform>
        <id>Q58FY4-1</id>
        <name>1</name>
        <sequence type="displayed"/>
    </isoform>
    <isoform>
        <id>Q58FY4-2</id>
        <name>2</name>
        <sequence type="described" ref="VSP_031886"/>
    </isoform>
    <isoform>
        <id>Q58FY4-3</id>
        <name>3</name>
        <sequence type="described" ref="VSP_038053"/>
    </isoform>
</comment>
<comment type="miscellaneous">
    <molecule>Isoform 2</molecule>
    <text evidence="5">May be due to a competing donor splice site.</text>
</comment>
<comment type="miscellaneous">
    <molecule>Isoform 3</molecule>
    <text evidence="5">Incomplete sequence. May be due to an intron retention.</text>
</comment>
<comment type="sequence caution" evidence="5">
    <conflict type="erroneous gene model prediction">
        <sequence resource="EMBL-CDS" id="AAM14813"/>
    </conflict>
</comment>
<comment type="sequence caution" evidence="5">
    <conflict type="erroneous initiation">
        <sequence resource="EMBL-CDS" id="BAE99197"/>
    </conflict>
</comment>
<organism>
    <name type="scientific">Arabidopsis thaliana</name>
    <name type="common">Mouse-ear cress</name>
    <dbReference type="NCBI Taxonomy" id="3702"/>
    <lineage>
        <taxon>Eukaryota</taxon>
        <taxon>Viridiplantae</taxon>
        <taxon>Streptophyta</taxon>
        <taxon>Embryophyta</taxon>
        <taxon>Tracheophyta</taxon>
        <taxon>Spermatophyta</taxon>
        <taxon>Magnoliopsida</taxon>
        <taxon>eudicotyledons</taxon>
        <taxon>Gunneridae</taxon>
        <taxon>Pentapetalae</taxon>
        <taxon>rosids</taxon>
        <taxon>malvids</taxon>
        <taxon>Brassicales</taxon>
        <taxon>Brassicaceae</taxon>
        <taxon>Camelineae</taxon>
        <taxon>Arabidopsis</taxon>
    </lineage>
</organism>
<gene>
    <name type="primary">PUB63</name>
    <name type="ordered locus">At2g40640</name>
    <name type="ORF">T2P4.1</name>
    <name type="ORF">T7D17.18</name>
</gene>
<dbReference type="EC" id="2.3.2.27"/>
<dbReference type="EMBL" id="AC002336">
    <property type="protein sequence ID" value="AAM14813.1"/>
    <property type="status" value="ALT_SEQ"/>
    <property type="molecule type" value="Genomic_DNA"/>
</dbReference>
<dbReference type="EMBL" id="CP002685">
    <property type="protein sequence ID" value="AEC09857.1"/>
    <property type="molecule type" value="Genomic_DNA"/>
</dbReference>
<dbReference type="EMBL" id="CP002685">
    <property type="protein sequence ID" value="AEC09858.1"/>
    <property type="molecule type" value="Genomic_DNA"/>
</dbReference>
<dbReference type="EMBL" id="AY168999">
    <property type="protein sequence ID" value="AAO11670.1"/>
    <property type="molecule type" value="mRNA"/>
</dbReference>
<dbReference type="EMBL" id="AY954825">
    <property type="protein sequence ID" value="AAX55151.1"/>
    <property type="molecule type" value="mRNA"/>
</dbReference>
<dbReference type="EMBL" id="AK175771">
    <property type="protein sequence ID" value="BAD43534.1"/>
    <property type="molecule type" value="mRNA"/>
</dbReference>
<dbReference type="EMBL" id="AK176741">
    <property type="protein sequence ID" value="BAD44504.1"/>
    <property type="molecule type" value="mRNA"/>
</dbReference>
<dbReference type="EMBL" id="AK227154">
    <property type="protein sequence ID" value="BAE99197.1"/>
    <property type="status" value="ALT_INIT"/>
    <property type="molecule type" value="mRNA"/>
</dbReference>
<dbReference type="EMBL" id="AK175678">
    <property type="protein sequence ID" value="BAD43441.1"/>
    <property type="molecule type" value="mRNA"/>
</dbReference>
<dbReference type="EMBL" id="AK175724">
    <property type="protein sequence ID" value="BAD43487.1"/>
    <property type="molecule type" value="mRNA"/>
</dbReference>
<dbReference type="PIR" id="A84832">
    <property type="entry name" value="A84832"/>
</dbReference>
<dbReference type="RefSeq" id="NP_850332.1">
    <molecule id="Q58FY4-1"/>
    <property type="nucleotide sequence ID" value="NM_180001.4"/>
</dbReference>
<dbReference type="RefSeq" id="NP_850333.1">
    <molecule id="Q58FY4-3"/>
    <property type="nucleotide sequence ID" value="NM_180002.3"/>
</dbReference>
<dbReference type="FunCoup" id="Q58FY4">
    <property type="interactions" value="16"/>
</dbReference>
<dbReference type="iPTMnet" id="Q58FY4"/>
<dbReference type="PaxDb" id="3702-AT2G40640.1"/>
<dbReference type="ProteomicsDB" id="224860">
    <molecule id="Q58FY4-1"/>
</dbReference>
<dbReference type="EnsemblPlants" id="AT2G40640.1">
    <molecule id="Q58FY4-1"/>
    <property type="protein sequence ID" value="AT2G40640.1"/>
    <property type="gene ID" value="AT2G40640"/>
</dbReference>
<dbReference type="EnsemblPlants" id="AT2G40640.2">
    <molecule id="Q58FY4-3"/>
    <property type="protein sequence ID" value="AT2G40640.2"/>
    <property type="gene ID" value="AT2G40640"/>
</dbReference>
<dbReference type="GeneID" id="818659"/>
<dbReference type="Gramene" id="AT2G40640.1">
    <molecule id="Q58FY4-1"/>
    <property type="protein sequence ID" value="AT2G40640.1"/>
    <property type="gene ID" value="AT2G40640"/>
</dbReference>
<dbReference type="Gramene" id="AT2G40640.2">
    <molecule id="Q58FY4-3"/>
    <property type="protein sequence ID" value="AT2G40640.2"/>
    <property type="gene ID" value="AT2G40640"/>
</dbReference>
<dbReference type="KEGG" id="ath:AT2G40640"/>
<dbReference type="Araport" id="AT2G40640"/>
<dbReference type="TAIR" id="AT2G40640"/>
<dbReference type="eggNOG" id="ENOG502QT2D">
    <property type="taxonomic scope" value="Eukaryota"/>
</dbReference>
<dbReference type="HOGENOM" id="CLU_788338_0_0_1"/>
<dbReference type="InParanoid" id="Q58FY4"/>
<dbReference type="PhylomeDB" id="Q58FY4"/>
<dbReference type="UniPathway" id="UPA00143"/>
<dbReference type="PRO" id="PR:Q58FY4"/>
<dbReference type="Proteomes" id="UP000006548">
    <property type="component" value="Chromosome 2"/>
</dbReference>
<dbReference type="ExpressionAtlas" id="Q58FY4">
    <property type="expression patterns" value="baseline and differential"/>
</dbReference>
<dbReference type="GO" id="GO:0004842">
    <property type="term" value="F:ubiquitin-protein transferase activity"/>
    <property type="evidence" value="ECO:0007669"/>
    <property type="project" value="InterPro"/>
</dbReference>
<dbReference type="GO" id="GO:0016567">
    <property type="term" value="P:protein ubiquitination"/>
    <property type="evidence" value="ECO:0007669"/>
    <property type="project" value="UniProtKB-UniPathway"/>
</dbReference>
<dbReference type="Gene3D" id="3.30.40.10">
    <property type="entry name" value="Zinc/RING finger domain, C3HC4 (zinc finger)"/>
    <property type="match status" value="1"/>
</dbReference>
<dbReference type="InterPro" id="IPR003613">
    <property type="entry name" value="Ubox_domain"/>
</dbReference>
<dbReference type="InterPro" id="IPR013083">
    <property type="entry name" value="Znf_RING/FYVE/PHD"/>
</dbReference>
<dbReference type="PANTHER" id="PTHR33644">
    <property type="entry name" value="U-BOX DOMAIN-CONTAINING PROTEIN 62-RELATED"/>
    <property type="match status" value="1"/>
</dbReference>
<dbReference type="PANTHER" id="PTHR33644:SF4">
    <property type="entry name" value="U-BOX DOMAIN-CONTAINING PROTEIN 63"/>
    <property type="match status" value="1"/>
</dbReference>
<dbReference type="Pfam" id="PF23112">
    <property type="entry name" value="PUB62-63_C"/>
    <property type="match status" value="1"/>
</dbReference>
<dbReference type="SUPFAM" id="SSF57850">
    <property type="entry name" value="RING/U-box"/>
    <property type="match status" value="1"/>
</dbReference>
<dbReference type="PROSITE" id="PS51698">
    <property type="entry name" value="U_BOX"/>
    <property type="match status" value="1"/>
</dbReference>